<accession>Q11BC3</accession>
<comment type="function">
    <text evidence="1">Involved in mRNA degradation. Catalyzes the phosphorolysis of single-stranded polyribonucleotides processively in the 3'- to 5'-direction.</text>
</comment>
<comment type="catalytic activity">
    <reaction evidence="1">
        <text>RNA(n+1) + phosphate = RNA(n) + a ribonucleoside 5'-diphosphate</text>
        <dbReference type="Rhea" id="RHEA:22096"/>
        <dbReference type="Rhea" id="RHEA-COMP:14527"/>
        <dbReference type="Rhea" id="RHEA-COMP:17342"/>
        <dbReference type="ChEBI" id="CHEBI:43474"/>
        <dbReference type="ChEBI" id="CHEBI:57930"/>
        <dbReference type="ChEBI" id="CHEBI:140395"/>
        <dbReference type="EC" id="2.7.7.8"/>
    </reaction>
</comment>
<comment type="cofactor">
    <cofactor evidence="1">
        <name>Mg(2+)</name>
        <dbReference type="ChEBI" id="CHEBI:18420"/>
    </cofactor>
</comment>
<comment type="subcellular location">
    <subcellularLocation>
        <location evidence="1">Cytoplasm</location>
    </subcellularLocation>
</comment>
<comment type="similarity">
    <text evidence="1">Belongs to the polyribonucleotide nucleotidyltransferase family.</text>
</comment>
<proteinExistence type="inferred from homology"/>
<keyword id="KW-0963">Cytoplasm</keyword>
<keyword id="KW-0460">Magnesium</keyword>
<keyword id="KW-0479">Metal-binding</keyword>
<keyword id="KW-0548">Nucleotidyltransferase</keyword>
<keyword id="KW-0694">RNA-binding</keyword>
<keyword id="KW-0808">Transferase</keyword>
<evidence type="ECO:0000255" key="1">
    <source>
        <dbReference type="HAMAP-Rule" id="MF_01595"/>
    </source>
</evidence>
<feature type="chain" id="PRO_0000329710" description="Polyribonucleotide nucleotidyltransferase">
    <location>
        <begin position="1"/>
        <end position="715"/>
    </location>
</feature>
<feature type="domain" description="KH" evidence="1">
    <location>
        <begin position="555"/>
        <end position="614"/>
    </location>
</feature>
<feature type="domain" description="S1 motif" evidence="1">
    <location>
        <begin position="624"/>
        <end position="692"/>
    </location>
</feature>
<feature type="binding site" evidence="1">
    <location>
        <position position="488"/>
    </location>
    <ligand>
        <name>Mg(2+)</name>
        <dbReference type="ChEBI" id="CHEBI:18420"/>
    </ligand>
</feature>
<feature type="binding site" evidence="1">
    <location>
        <position position="494"/>
    </location>
    <ligand>
        <name>Mg(2+)</name>
        <dbReference type="ChEBI" id="CHEBI:18420"/>
    </ligand>
</feature>
<organism>
    <name type="scientific">Chelativorans sp. (strain BNC1)</name>
    <dbReference type="NCBI Taxonomy" id="266779"/>
    <lineage>
        <taxon>Bacteria</taxon>
        <taxon>Pseudomonadati</taxon>
        <taxon>Pseudomonadota</taxon>
        <taxon>Alphaproteobacteria</taxon>
        <taxon>Hyphomicrobiales</taxon>
        <taxon>Phyllobacteriaceae</taxon>
        <taxon>Chelativorans</taxon>
    </lineage>
</organism>
<gene>
    <name evidence="1" type="primary">pnp</name>
    <name type="ordered locus">Meso_3935</name>
</gene>
<name>PNP_CHESB</name>
<dbReference type="EC" id="2.7.7.8" evidence="1"/>
<dbReference type="EMBL" id="CP000390">
    <property type="protein sequence ID" value="ABG65302.1"/>
    <property type="molecule type" value="Genomic_DNA"/>
</dbReference>
<dbReference type="SMR" id="Q11BC3"/>
<dbReference type="STRING" id="266779.Meso_3935"/>
<dbReference type="KEGG" id="mes:Meso_3935"/>
<dbReference type="eggNOG" id="COG1185">
    <property type="taxonomic scope" value="Bacteria"/>
</dbReference>
<dbReference type="HOGENOM" id="CLU_004217_2_2_5"/>
<dbReference type="OrthoDB" id="9804305at2"/>
<dbReference type="GO" id="GO:0005829">
    <property type="term" value="C:cytosol"/>
    <property type="evidence" value="ECO:0007669"/>
    <property type="project" value="TreeGrafter"/>
</dbReference>
<dbReference type="GO" id="GO:0000175">
    <property type="term" value="F:3'-5'-RNA exonuclease activity"/>
    <property type="evidence" value="ECO:0007669"/>
    <property type="project" value="TreeGrafter"/>
</dbReference>
<dbReference type="GO" id="GO:0000287">
    <property type="term" value="F:magnesium ion binding"/>
    <property type="evidence" value="ECO:0007669"/>
    <property type="project" value="UniProtKB-UniRule"/>
</dbReference>
<dbReference type="GO" id="GO:0004654">
    <property type="term" value="F:polyribonucleotide nucleotidyltransferase activity"/>
    <property type="evidence" value="ECO:0007669"/>
    <property type="project" value="UniProtKB-UniRule"/>
</dbReference>
<dbReference type="GO" id="GO:0003723">
    <property type="term" value="F:RNA binding"/>
    <property type="evidence" value="ECO:0007669"/>
    <property type="project" value="UniProtKB-UniRule"/>
</dbReference>
<dbReference type="GO" id="GO:0006402">
    <property type="term" value="P:mRNA catabolic process"/>
    <property type="evidence" value="ECO:0007669"/>
    <property type="project" value="UniProtKB-UniRule"/>
</dbReference>
<dbReference type="GO" id="GO:0006396">
    <property type="term" value="P:RNA processing"/>
    <property type="evidence" value="ECO:0007669"/>
    <property type="project" value="InterPro"/>
</dbReference>
<dbReference type="CDD" id="cd02393">
    <property type="entry name" value="KH-I_PNPase"/>
    <property type="match status" value="1"/>
</dbReference>
<dbReference type="CDD" id="cd11363">
    <property type="entry name" value="RNase_PH_PNPase_1"/>
    <property type="match status" value="1"/>
</dbReference>
<dbReference type="CDD" id="cd11364">
    <property type="entry name" value="RNase_PH_PNPase_2"/>
    <property type="match status" value="1"/>
</dbReference>
<dbReference type="CDD" id="cd04472">
    <property type="entry name" value="S1_PNPase"/>
    <property type="match status" value="1"/>
</dbReference>
<dbReference type="FunFam" id="2.40.50.140:FF:000107">
    <property type="entry name" value="Polyribonucleotide nucleotidyltransferase"/>
    <property type="match status" value="1"/>
</dbReference>
<dbReference type="FunFam" id="3.30.1370.10:FF:000001">
    <property type="entry name" value="Polyribonucleotide nucleotidyltransferase"/>
    <property type="match status" value="1"/>
</dbReference>
<dbReference type="FunFam" id="3.30.230.70:FF:000001">
    <property type="entry name" value="Polyribonucleotide nucleotidyltransferase"/>
    <property type="match status" value="1"/>
</dbReference>
<dbReference type="FunFam" id="3.30.230.70:FF:000002">
    <property type="entry name" value="Polyribonucleotide nucleotidyltransferase"/>
    <property type="match status" value="1"/>
</dbReference>
<dbReference type="Gene3D" id="3.30.230.70">
    <property type="entry name" value="GHMP Kinase, N-terminal domain"/>
    <property type="match status" value="2"/>
</dbReference>
<dbReference type="Gene3D" id="3.30.1370.10">
    <property type="entry name" value="K Homology domain, type 1"/>
    <property type="match status" value="1"/>
</dbReference>
<dbReference type="Gene3D" id="2.40.50.140">
    <property type="entry name" value="Nucleic acid-binding proteins"/>
    <property type="match status" value="1"/>
</dbReference>
<dbReference type="HAMAP" id="MF_01595">
    <property type="entry name" value="PNPase"/>
    <property type="match status" value="1"/>
</dbReference>
<dbReference type="InterPro" id="IPR001247">
    <property type="entry name" value="ExoRNase_PH_dom1"/>
</dbReference>
<dbReference type="InterPro" id="IPR015847">
    <property type="entry name" value="ExoRNase_PH_dom2"/>
</dbReference>
<dbReference type="InterPro" id="IPR036345">
    <property type="entry name" value="ExoRNase_PH_dom2_sf"/>
</dbReference>
<dbReference type="InterPro" id="IPR004087">
    <property type="entry name" value="KH_dom"/>
</dbReference>
<dbReference type="InterPro" id="IPR004088">
    <property type="entry name" value="KH_dom_type_1"/>
</dbReference>
<dbReference type="InterPro" id="IPR036612">
    <property type="entry name" value="KH_dom_type_1_sf"/>
</dbReference>
<dbReference type="InterPro" id="IPR012340">
    <property type="entry name" value="NA-bd_OB-fold"/>
</dbReference>
<dbReference type="InterPro" id="IPR012162">
    <property type="entry name" value="PNPase"/>
</dbReference>
<dbReference type="InterPro" id="IPR027408">
    <property type="entry name" value="PNPase/RNase_PH_dom_sf"/>
</dbReference>
<dbReference type="InterPro" id="IPR015848">
    <property type="entry name" value="PNPase_PH_RNA-bd_bac/org-type"/>
</dbReference>
<dbReference type="InterPro" id="IPR020568">
    <property type="entry name" value="Ribosomal_Su5_D2-typ_SF"/>
</dbReference>
<dbReference type="InterPro" id="IPR003029">
    <property type="entry name" value="S1_domain"/>
</dbReference>
<dbReference type="NCBIfam" id="TIGR03591">
    <property type="entry name" value="polynuc_phos"/>
    <property type="match status" value="1"/>
</dbReference>
<dbReference type="NCBIfam" id="NF008805">
    <property type="entry name" value="PRK11824.1"/>
    <property type="match status" value="1"/>
</dbReference>
<dbReference type="PANTHER" id="PTHR11252">
    <property type="entry name" value="POLYRIBONUCLEOTIDE NUCLEOTIDYLTRANSFERASE"/>
    <property type="match status" value="1"/>
</dbReference>
<dbReference type="PANTHER" id="PTHR11252:SF0">
    <property type="entry name" value="POLYRIBONUCLEOTIDE NUCLEOTIDYLTRANSFERASE 1, MITOCHONDRIAL"/>
    <property type="match status" value="1"/>
</dbReference>
<dbReference type="Pfam" id="PF00013">
    <property type="entry name" value="KH_1"/>
    <property type="match status" value="1"/>
</dbReference>
<dbReference type="Pfam" id="PF03726">
    <property type="entry name" value="PNPase"/>
    <property type="match status" value="1"/>
</dbReference>
<dbReference type="Pfam" id="PF01138">
    <property type="entry name" value="RNase_PH"/>
    <property type="match status" value="2"/>
</dbReference>
<dbReference type="Pfam" id="PF03725">
    <property type="entry name" value="RNase_PH_C"/>
    <property type="match status" value="2"/>
</dbReference>
<dbReference type="Pfam" id="PF00575">
    <property type="entry name" value="S1"/>
    <property type="match status" value="1"/>
</dbReference>
<dbReference type="PIRSF" id="PIRSF005499">
    <property type="entry name" value="PNPase"/>
    <property type="match status" value="1"/>
</dbReference>
<dbReference type="SMART" id="SM00322">
    <property type="entry name" value="KH"/>
    <property type="match status" value="1"/>
</dbReference>
<dbReference type="SMART" id="SM00316">
    <property type="entry name" value="S1"/>
    <property type="match status" value="1"/>
</dbReference>
<dbReference type="SUPFAM" id="SSF54791">
    <property type="entry name" value="Eukaryotic type KH-domain (KH-domain type I)"/>
    <property type="match status" value="1"/>
</dbReference>
<dbReference type="SUPFAM" id="SSF50249">
    <property type="entry name" value="Nucleic acid-binding proteins"/>
    <property type="match status" value="1"/>
</dbReference>
<dbReference type="SUPFAM" id="SSF55666">
    <property type="entry name" value="Ribonuclease PH domain 2-like"/>
    <property type="match status" value="2"/>
</dbReference>
<dbReference type="SUPFAM" id="SSF54211">
    <property type="entry name" value="Ribosomal protein S5 domain 2-like"/>
    <property type="match status" value="2"/>
</dbReference>
<dbReference type="PROSITE" id="PS50084">
    <property type="entry name" value="KH_TYPE_1"/>
    <property type="match status" value="1"/>
</dbReference>
<dbReference type="PROSITE" id="PS50126">
    <property type="entry name" value="S1"/>
    <property type="match status" value="1"/>
</dbReference>
<reference key="1">
    <citation type="submission" date="2006-06" db="EMBL/GenBank/DDBJ databases">
        <title>Complete sequence of chromosome of Mesorhizobium sp. BNC1.</title>
        <authorList>
            <consortium name="US DOE Joint Genome Institute"/>
            <person name="Copeland A."/>
            <person name="Lucas S."/>
            <person name="Lapidus A."/>
            <person name="Barry K."/>
            <person name="Detter J.C."/>
            <person name="Glavina del Rio T."/>
            <person name="Hammon N."/>
            <person name="Israni S."/>
            <person name="Dalin E."/>
            <person name="Tice H."/>
            <person name="Pitluck S."/>
            <person name="Chertkov O."/>
            <person name="Brettin T."/>
            <person name="Bruce D."/>
            <person name="Han C."/>
            <person name="Tapia R."/>
            <person name="Gilna P."/>
            <person name="Schmutz J."/>
            <person name="Larimer F."/>
            <person name="Land M."/>
            <person name="Hauser L."/>
            <person name="Kyrpides N."/>
            <person name="Mikhailova N."/>
            <person name="Richardson P."/>
        </authorList>
    </citation>
    <scope>NUCLEOTIDE SEQUENCE [LARGE SCALE GENOMIC DNA]</scope>
    <source>
        <strain>BNC1</strain>
    </source>
</reference>
<sequence length="715" mass="77890">MFNHHKVEIEWGGRPLILETGKIARQADGAVLATYGETVVLATVVSAKEPKPGIDFFPLTVNYQEKTFAAGKIPGGYFKREGRPSEKETLVSRLIDRPIRPLFVEGYKNDTQVIITVLQHDLENDPDILSMVAASAALTLSGVPFMGPVGAARVGYVGGEYILNPHLDEMAETKLDLVVAGTSDAVLMVESEAHELPEDVMLGAVMFGHRNFQPVIDAIIKLAEVAAKEPREFLPEDLSALEAEMLKVVEADLRDAYKITNKQARYDAVNAAKAKVKEAFLPEGAEAYKWTPEQVATVFKALQAKIVRWNILDTGSRIDGRDLRSVRPIVAEVGVLPRTHGSAVFTRGETQALVVATLGTGEDEQYVDSLTGTVKETFMLHYNFPPYSVGETGRMGSPGRREIGHGKLAWRAVHPLLPAPEQFPYTIRVVSEITESNGSSSMATVCGTSLALMDAGVPLAKPVAGIAMGLIKEDDRFAVLSDILGDEDHLGDMDFKVAGTAEGVTSLQMDIKITGITEEIMKVALEQAKDGRLHILGEMANALSESRGELGEFAPRIEVMHIPTDKIRDVIGTGGKVIREIVEKTGAKINIEDDGTVKIASSNGKEIEAARKWIHSIVAEPEVGEIYEGTVVKTADFGAFVNFFGPRDGLVHISQLAPERVQKTTDVVKEGDKVFVKLMGFDERGKVRLSMKVVDQETGKEIVQEKKEEKQEAEG</sequence>
<protein>
    <recommendedName>
        <fullName evidence="1">Polyribonucleotide nucleotidyltransferase</fullName>
        <ecNumber evidence="1">2.7.7.8</ecNumber>
    </recommendedName>
    <alternativeName>
        <fullName evidence="1">Polynucleotide phosphorylase</fullName>
        <shortName evidence="1">PNPase</shortName>
    </alternativeName>
</protein>